<keyword id="KW-0560">Oxidoreductase</keyword>
<keyword id="KW-0663">Pyridoxal phosphate</keyword>
<proteinExistence type="inferred from homology"/>
<sequence>MTSKSSPLIFERSREGRYAYSLPISDIKTNSVESLLDDKFIRKNKAEFPEVAELDLVRHYTELSNKNFGVDNGFYPLGSCTMKYNPKINEKVARIPGFSESHPLQDEDQVQGSLEIIYSLQEELKEITGMDEVTLQPAAGAHGEWTALMIFKAYHENNGEGHRDEVIVPDSAHGTNPASASFAGFKSVTVKSNERGEVDIDDLKRVVNENTAAIMLTNPNTLGIFEKNIMEIREIVHNAGGLLYYDGANLNAIMDKVRPGDMGFDAVHLNLHKTFTGPHGGGGPGSGPVGVVKELASYLPKPMVIKDGDKFKYDNDIKNSIGRVKPFYGNFGIYLRAYTYIRTMGATGLKEVSEAAVLNANYIKARLSEHFEIPYKQYCKHEFVLSGVRQKEFGVRTLDMAKRLLDFGVHPPTIYFPLNVEEGMMIEPTETESKETLDYFIDTLISIAEEAKNDPDKVLEAPYTTVIDRLDEATAARKPILKFENLKQEK</sequence>
<name>GCSPB_STAAR</name>
<gene>
    <name evidence="1" type="primary">gcvPB</name>
    <name type="ordered locus">SAR1612</name>
</gene>
<protein>
    <recommendedName>
        <fullName evidence="1">Probable glycine dehydrogenase (decarboxylating) subunit 2</fullName>
        <ecNumber evidence="1">1.4.4.2</ecNumber>
    </recommendedName>
    <alternativeName>
        <fullName evidence="1">Glycine cleavage system P-protein subunit 2</fullName>
    </alternativeName>
    <alternativeName>
        <fullName evidence="1">Glycine decarboxylase subunit 2</fullName>
    </alternativeName>
    <alternativeName>
        <fullName evidence="1">Glycine dehydrogenase (aminomethyl-transferring) subunit 2</fullName>
    </alternativeName>
</protein>
<feature type="chain" id="PRO_0000167014" description="Probable glycine dehydrogenase (decarboxylating) subunit 2">
    <location>
        <begin position="1"/>
        <end position="490"/>
    </location>
</feature>
<feature type="modified residue" description="N6-(pyridoxal phosphate)lysine" evidence="1">
    <location>
        <position position="273"/>
    </location>
</feature>
<accession>Q6GGG4</accession>
<organism>
    <name type="scientific">Staphylococcus aureus (strain MRSA252)</name>
    <dbReference type="NCBI Taxonomy" id="282458"/>
    <lineage>
        <taxon>Bacteria</taxon>
        <taxon>Bacillati</taxon>
        <taxon>Bacillota</taxon>
        <taxon>Bacilli</taxon>
        <taxon>Bacillales</taxon>
        <taxon>Staphylococcaceae</taxon>
        <taxon>Staphylococcus</taxon>
    </lineage>
</organism>
<dbReference type="EC" id="1.4.4.2" evidence="1"/>
<dbReference type="EMBL" id="BX571856">
    <property type="protein sequence ID" value="CAG40607.1"/>
    <property type="molecule type" value="Genomic_DNA"/>
</dbReference>
<dbReference type="RefSeq" id="WP_000202178.1">
    <property type="nucleotide sequence ID" value="NC_002952.2"/>
</dbReference>
<dbReference type="SMR" id="Q6GGG4"/>
<dbReference type="KEGG" id="sar:SAR1612"/>
<dbReference type="HOGENOM" id="CLU_004620_5_0_9"/>
<dbReference type="Proteomes" id="UP000000596">
    <property type="component" value="Chromosome"/>
</dbReference>
<dbReference type="GO" id="GO:0005829">
    <property type="term" value="C:cytosol"/>
    <property type="evidence" value="ECO:0007669"/>
    <property type="project" value="TreeGrafter"/>
</dbReference>
<dbReference type="GO" id="GO:0005960">
    <property type="term" value="C:glycine cleavage complex"/>
    <property type="evidence" value="ECO:0007669"/>
    <property type="project" value="TreeGrafter"/>
</dbReference>
<dbReference type="GO" id="GO:0016594">
    <property type="term" value="F:glycine binding"/>
    <property type="evidence" value="ECO:0007669"/>
    <property type="project" value="TreeGrafter"/>
</dbReference>
<dbReference type="GO" id="GO:0004375">
    <property type="term" value="F:glycine dehydrogenase (decarboxylating) activity"/>
    <property type="evidence" value="ECO:0007669"/>
    <property type="project" value="UniProtKB-EC"/>
</dbReference>
<dbReference type="GO" id="GO:0030170">
    <property type="term" value="F:pyridoxal phosphate binding"/>
    <property type="evidence" value="ECO:0007669"/>
    <property type="project" value="TreeGrafter"/>
</dbReference>
<dbReference type="GO" id="GO:0019464">
    <property type="term" value="P:glycine decarboxylation via glycine cleavage system"/>
    <property type="evidence" value="ECO:0007669"/>
    <property type="project" value="UniProtKB-UniRule"/>
</dbReference>
<dbReference type="CDD" id="cd00613">
    <property type="entry name" value="GDC-P"/>
    <property type="match status" value="1"/>
</dbReference>
<dbReference type="FunFam" id="3.40.640.10:FF:000034">
    <property type="entry name" value="Probable glycine dehydrogenase (decarboxylating) subunit 2"/>
    <property type="match status" value="1"/>
</dbReference>
<dbReference type="FunFam" id="3.90.1150.10:FF:000014">
    <property type="entry name" value="Probable glycine dehydrogenase (decarboxylating) subunit 2"/>
    <property type="match status" value="1"/>
</dbReference>
<dbReference type="Gene3D" id="6.20.440.10">
    <property type="match status" value="1"/>
</dbReference>
<dbReference type="Gene3D" id="3.90.1150.10">
    <property type="entry name" value="Aspartate Aminotransferase, domain 1"/>
    <property type="match status" value="1"/>
</dbReference>
<dbReference type="Gene3D" id="3.40.640.10">
    <property type="entry name" value="Type I PLP-dependent aspartate aminotransferase-like (Major domain)"/>
    <property type="match status" value="1"/>
</dbReference>
<dbReference type="HAMAP" id="MF_00713">
    <property type="entry name" value="GcvPB"/>
    <property type="match status" value="1"/>
</dbReference>
<dbReference type="InterPro" id="IPR000192">
    <property type="entry name" value="Aminotrans_V_dom"/>
</dbReference>
<dbReference type="InterPro" id="IPR023012">
    <property type="entry name" value="GcvPB"/>
</dbReference>
<dbReference type="InterPro" id="IPR049316">
    <property type="entry name" value="GDC-P_C"/>
</dbReference>
<dbReference type="InterPro" id="IPR020581">
    <property type="entry name" value="GDC_P"/>
</dbReference>
<dbReference type="InterPro" id="IPR015424">
    <property type="entry name" value="PyrdxlP-dep_Trfase"/>
</dbReference>
<dbReference type="InterPro" id="IPR015421">
    <property type="entry name" value="PyrdxlP-dep_Trfase_major"/>
</dbReference>
<dbReference type="InterPro" id="IPR015422">
    <property type="entry name" value="PyrdxlP-dep_Trfase_small"/>
</dbReference>
<dbReference type="NCBIfam" id="NF003346">
    <property type="entry name" value="PRK04366.1"/>
    <property type="match status" value="1"/>
</dbReference>
<dbReference type="PANTHER" id="PTHR11773:SF1">
    <property type="entry name" value="GLYCINE DEHYDROGENASE (DECARBOXYLATING), MITOCHONDRIAL"/>
    <property type="match status" value="1"/>
</dbReference>
<dbReference type="PANTHER" id="PTHR11773">
    <property type="entry name" value="GLYCINE DEHYDROGENASE, DECARBOXYLATING"/>
    <property type="match status" value="1"/>
</dbReference>
<dbReference type="Pfam" id="PF00266">
    <property type="entry name" value="Aminotran_5"/>
    <property type="match status" value="1"/>
</dbReference>
<dbReference type="Pfam" id="PF21478">
    <property type="entry name" value="GcvP2_C"/>
    <property type="match status" value="1"/>
</dbReference>
<dbReference type="SUPFAM" id="SSF53383">
    <property type="entry name" value="PLP-dependent transferases"/>
    <property type="match status" value="1"/>
</dbReference>
<comment type="function">
    <text evidence="1">The glycine cleavage system catalyzes the degradation of glycine. The P protein binds the alpha-amino group of glycine through its pyridoxal phosphate cofactor; CO(2) is released and the remaining methylamine moiety is then transferred to the lipoamide cofactor of the H protein.</text>
</comment>
<comment type="catalytic activity">
    <reaction evidence="1">
        <text>N(6)-[(R)-lipoyl]-L-lysyl-[glycine-cleavage complex H protein] + glycine + H(+) = N(6)-[(R)-S(8)-aminomethyldihydrolipoyl]-L-lysyl-[glycine-cleavage complex H protein] + CO2</text>
        <dbReference type="Rhea" id="RHEA:24304"/>
        <dbReference type="Rhea" id="RHEA-COMP:10494"/>
        <dbReference type="Rhea" id="RHEA-COMP:10495"/>
        <dbReference type="ChEBI" id="CHEBI:15378"/>
        <dbReference type="ChEBI" id="CHEBI:16526"/>
        <dbReference type="ChEBI" id="CHEBI:57305"/>
        <dbReference type="ChEBI" id="CHEBI:83099"/>
        <dbReference type="ChEBI" id="CHEBI:83143"/>
        <dbReference type="EC" id="1.4.4.2"/>
    </reaction>
</comment>
<comment type="cofactor">
    <cofactor evidence="1">
        <name>pyridoxal 5'-phosphate</name>
        <dbReference type="ChEBI" id="CHEBI:597326"/>
    </cofactor>
</comment>
<comment type="subunit">
    <text evidence="1">The glycine cleavage system is composed of four proteins: P, T, L and H. In this organism, the P 'protein' is a heterodimer of two subunits.</text>
</comment>
<comment type="similarity">
    <text evidence="1">Belongs to the GcvP family. C-terminal subunit subfamily.</text>
</comment>
<evidence type="ECO:0000255" key="1">
    <source>
        <dbReference type="HAMAP-Rule" id="MF_00713"/>
    </source>
</evidence>
<reference key="1">
    <citation type="journal article" date="2004" name="Proc. Natl. Acad. Sci. U.S.A.">
        <title>Complete genomes of two clinical Staphylococcus aureus strains: evidence for the rapid evolution of virulence and drug resistance.</title>
        <authorList>
            <person name="Holden M.T.G."/>
            <person name="Feil E.J."/>
            <person name="Lindsay J.A."/>
            <person name="Peacock S.J."/>
            <person name="Day N.P.J."/>
            <person name="Enright M.C."/>
            <person name="Foster T.J."/>
            <person name="Moore C.E."/>
            <person name="Hurst L."/>
            <person name="Atkin R."/>
            <person name="Barron A."/>
            <person name="Bason N."/>
            <person name="Bentley S.D."/>
            <person name="Chillingworth C."/>
            <person name="Chillingworth T."/>
            <person name="Churcher C."/>
            <person name="Clark L."/>
            <person name="Corton C."/>
            <person name="Cronin A."/>
            <person name="Doggett J."/>
            <person name="Dowd L."/>
            <person name="Feltwell T."/>
            <person name="Hance Z."/>
            <person name="Harris B."/>
            <person name="Hauser H."/>
            <person name="Holroyd S."/>
            <person name="Jagels K."/>
            <person name="James K.D."/>
            <person name="Lennard N."/>
            <person name="Line A."/>
            <person name="Mayes R."/>
            <person name="Moule S."/>
            <person name="Mungall K."/>
            <person name="Ormond D."/>
            <person name="Quail M.A."/>
            <person name="Rabbinowitsch E."/>
            <person name="Rutherford K.M."/>
            <person name="Sanders M."/>
            <person name="Sharp S."/>
            <person name="Simmonds M."/>
            <person name="Stevens K."/>
            <person name="Whitehead S."/>
            <person name="Barrell B.G."/>
            <person name="Spratt B.G."/>
            <person name="Parkhill J."/>
        </authorList>
    </citation>
    <scope>NUCLEOTIDE SEQUENCE [LARGE SCALE GENOMIC DNA]</scope>
    <source>
        <strain>MRSA252</strain>
    </source>
</reference>